<proteinExistence type="inferred from homology"/>
<organism>
    <name type="scientific">Histophilus somni (strain 2336)</name>
    <name type="common">Haemophilus somnus</name>
    <dbReference type="NCBI Taxonomy" id="228400"/>
    <lineage>
        <taxon>Bacteria</taxon>
        <taxon>Pseudomonadati</taxon>
        <taxon>Pseudomonadota</taxon>
        <taxon>Gammaproteobacteria</taxon>
        <taxon>Pasteurellales</taxon>
        <taxon>Pasteurellaceae</taxon>
        <taxon>Histophilus</taxon>
    </lineage>
</organism>
<protein>
    <recommendedName>
        <fullName evidence="1">Large ribosomal subunit protein uL16</fullName>
    </recommendedName>
    <alternativeName>
        <fullName evidence="2">50S ribosomal protein L16</fullName>
    </alternativeName>
</protein>
<keyword id="KW-0687">Ribonucleoprotein</keyword>
<keyword id="KW-0689">Ribosomal protein</keyword>
<keyword id="KW-0694">RNA-binding</keyword>
<keyword id="KW-0699">rRNA-binding</keyword>
<keyword id="KW-0820">tRNA-binding</keyword>
<feature type="chain" id="PRO_1000086760" description="Large ribosomal subunit protein uL16">
    <location>
        <begin position="1"/>
        <end position="136"/>
    </location>
</feature>
<accession>B0UX20</accession>
<reference key="1">
    <citation type="submission" date="2008-02" db="EMBL/GenBank/DDBJ databases">
        <title>Complete sequence of Haemophilus somnus 2336.</title>
        <authorList>
            <consortium name="US DOE Joint Genome Institute"/>
            <person name="Siddaramappa S."/>
            <person name="Duncan A.J."/>
            <person name="Challacombe J.F."/>
            <person name="Rainey D."/>
            <person name="Gillaspy A.F."/>
            <person name="Carson M."/>
            <person name="Gipson J."/>
            <person name="Gipson M."/>
            <person name="Bruce D."/>
            <person name="Detter J.C."/>
            <person name="Han C.S."/>
            <person name="Land M."/>
            <person name="Tapia R."/>
            <person name="Thompson L.S."/>
            <person name="Orvis J."/>
            <person name="Zaitshik J."/>
            <person name="Barnes G."/>
            <person name="Brettin T.S."/>
            <person name="Dyer D.W."/>
            <person name="Inzana T.J."/>
        </authorList>
    </citation>
    <scope>NUCLEOTIDE SEQUENCE [LARGE SCALE GENOMIC DNA]</scope>
    <source>
        <strain>2336</strain>
    </source>
</reference>
<dbReference type="EMBL" id="CP000947">
    <property type="protein sequence ID" value="ACA31753.1"/>
    <property type="molecule type" value="Genomic_DNA"/>
</dbReference>
<dbReference type="RefSeq" id="WP_011608222.1">
    <property type="nucleotide sequence ID" value="NC_010519.1"/>
</dbReference>
<dbReference type="SMR" id="B0UX20"/>
<dbReference type="STRING" id="228400.HSM_1959"/>
<dbReference type="GeneID" id="31488270"/>
<dbReference type="KEGG" id="hsm:HSM_1959"/>
<dbReference type="HOGENOM" id="CLU_078858_2_1_6"/>
<dbReference type="GO" id="GO:0022625">
    <property type="term" value="C:cytosolic large ribosomal subunit"/>
    <property type="evidence" value="ECO:0007669"/>
    <property type="project" value="TreeGrafter"/>
</dbReference>
<dbReference type="GO" id="GO:0019843">
    <property type="term" value="F:rRNA binding"/>
    <property type="evidence" value="ECO:0007669"/>
    <property type="project" value="UniProtKB-UniRule"/>
</dbReference>
<dbReference type="GO" id="GO:0003735">
    <property type="term" value="F:structural constituent of ribosome"/>
    <property type="evidence" value="ECO:0007669"/>
    <property type="project" value="InterPro"/>
</dbReference>
<dbReference type="GO" id="GO:0000049">
    <property type="term" value="F:tRNA binding"/>
    <property type="evidence" value="ECO:0007669"/>
    <property type="project" value="UniProtKB-KW"/>
</dbReference>
<dbReference type="GO" id="GO:0006412">
    <property type="term" value="P:translation"/>
    <property type="evidence" value="ECO:0007669"/>
    <property type="project" value="UniProtKB-UniRule"/>
</dbReference>
<dbReference type="CDD" id="cd01433">
    <property type="entry name" value="Ribosomal_L16_L10e"/>
    <property type="match status" value="1"/>
</dbReference>
<dbReference type="FunFam" id="3.90.1170.10:FF:000001">
    <property type="entry name" value="50S ribosomal protein L16"/>
    <property type="match status" value="1"/>
</dbReference>
<dbReference type="Gene3D" id="3.90.1170.10">
    <property type="entry name" value="Ribosomal protein L10e/L16"/>
    <property type="match status" value="1"/>
</dbReference>
<dbReference type="HAMAP" id="MF_01342">
    <property type="entry name" value="Ribosomal_uL16"/>
    <property type="match status" value="1"/>
</dbReference>
<dbReference type="InterPro" id="IPR047873">
    <property type="entry name" value="Ribosomal_uL16"/>
</dbReference>
<dbReference type="InterPro" id="IPR000114">
    <property type="entry name" value="Ribosomal_uL16_bact-type"/>
</dbReference>
<dbReference type="InterPro" id="IPR020798">
    <property type="entry name" value="Ribosomal_uL16_CS"/>
</dbReference>
<dbReference type="InterPro" id="IPR016180">
    <property type="entry name" value="Ribosomal_uL16_dom"/>
</dbReference>
<dbReference type="InterPro" id="IPR036920">
    <property type="entry name" value="Ribosomal_uL16_sf"/>
</dbReference>
<dbReference type="NCBIfam" id="TIGR01164">
    <property type="entry name" value="rplP_bact"/>
    <property type="match status" value="1"/>
</dbReference>
<dbReference type="PANTHER" id="PTHR12220">
    <property type="entry name" value="50S/60S RIBOSOMAL PROTEIN L16"/>
    <property type="match status" value="1"/>
</dbReference>
<dbReference type="PANTHER" id="PTHR12220:SF13">
    <property type="entry name" value="LARGE RIBOSOMAL SUBUNIT PROTEIN UL16M"/>
    <property type="match status" value="1"/>
</dbReference>
<dbReference type="Pfam" id="PF00252">
    <property type="entry name" value="Ribosomal_L16"/>
    <property type="match status" value="1"/>
</dbReference>
<dbReference type="PRINTS" id="PR00060">
    <property type="entry name" value="RIBOSOMALL16"/>
</dbReference>
<dbReference type="SUPFAM" id="SSF54686">
    <property type="entry name" value="Ribosomal protein L16p/L10e"/>
    <property type="match status" value="1"/>
</dbReference>
<dbReference type="PROSITE" id="PS00586">
    <property type="entry name" value="RIBOSOMAL_L16_1"/>
    <property type="match status" value="1"/>
</dbReference>
<dbReference type="PROSITE" id="PS00701">
    <property type="entry name" value="RIBOSOMAL_L16_2"/>
    <property type="match status" value="1"/>
</dbReference>
<name>RL16_HISS2</name>
<comment type="function">
    <text evidence="1">Binds 23S rRNA and is also seen to make contacts with the A and possibly P site tRNAs.</text>
</comment>
<comment type="subunit">
    <text evidence="1">Part of the 50S ribosomal subunit.</text>
</comment>
<comment type="similarity">
    <text evidence="1">Belongs to the universal ribosomal protein uL16 family.</text>
</comment>
<sequence>MLQPKRTKFRKVHKGRNRGIAAGTEVSFGTFGLKAVGRGRLTARQIEAARRAMTRAVKRQGKIWIRVFPDKPITEKPLEVRMGKGKGNVEYWVALIQPGKVMYEMDGVSEEVARHAFALAAAKLPIKTTFVTKTVM</sequence>
<gene>
    <name evidence="1" type="primary">rplP</name>
    <name type="ordered locus">HSM_1959</name>
</gene>
<evidence type="ECO:0000255" key="1">
    <source>
        <dbReference type="HAMAP-Rule" id="MF_01342"/>
    </source>
</evidence>
<evidence type="ECO:0000305" key="2"/>